<sequence>MKSNRQARHILGLDYRISNQRKVVTEGDTSSVVNNPTGRKRRADSQK</sequence>
<feature type="chain" id="PRO_0000208694" description="Stationary-phase-induced ribosome-associated protein">
    <location>
        <begin position="1"/>
        <end position="47"/>
    </location>
</feature>
<feature type="region of interest" description="Disordered" evidence="2">
    <location>
        <begin position="23"/>
        <end position="47"/>
    </location>
</feature>
<feature type="compositionally biased region" description="Polar residues" evidence="2">
    <location>
        <begin position="23"/>
        <end position="37"/>
    </location>
</feature>
<feature type="compositionally biased region" description="Basic residues" evidence="2">
    <location>
        <begin position="38"/>
        <end position="47"/>
    </location>
</feature>
<keyword id="KW-1185">Reference proteome</keyword>
<name>SRA_SALTY</name>
<gene>
    <name type="primary">sra</name>
    <name type="synonym">rpsV</name>
    <name type="ordered locus">STM1565</name>
</gene>
<protein>
    <recommendedName>
        <fullName>Stationary-phase-induced ribosome-associated protein</fullName>
        <shortName>SRA</shortName>
    </recommendedName>
    <alternativeName>
        <fullName>30S ribosomal protein S22</fullName>
    </alternativeName>
</protein>
<proteinExistence type="inferred from homology"/>
<comment type="function">
    <text evidence="1">Although this protein associates with the 30S subunit of the ribosome it is not considered to be a bona fide ribosomal protein.</text>
</comment>
<comment type="subunit">
    <text evidence="1">Associates exclusively with the 30S subunit; there is 0.1 copy per ribosome in the exponential phase and 0.4 copies per ribosome in the stationary phase.</text>
</comment>
<comment type="similarity">
    <text evidence="3">Belongs to the SRA family.</text>
</comment>
<dbReference type="EMBL" id="AE006468">
    <property type="protein sequence ID" value="AAL20483.1"/>
    <property type="molecule type" value="Genomic_DNA"/>
</dbReference>
<dbReference type="RefSeq" id="NP_460524.1">
    <property type="nucleotide sequence ID" value="NC_003197.2"/>
</dbReference>
<dbReference type="RefSeq" id="WP_000841559.1">
    <property type="nucleotide sequence ID" value="NC_003197.2"/>
</dbReference>
<dbReference type="STRING" id="99287.STM1565"/>
<dbReference type="PaxDb" id="99287-STM1565"/>
<dbReference type="GeneID" id="1253083"/>
<dbReference type="KEGG" id="stm:STM1565"/>
<dbReference type="PATRIC" id="fig|99287.12.peg.1656"/>
<dbReference type="HOGENOM" id="CLU_210948_0_0_6"/>
<dbReference type="PhylomeDB" id="Q7CQJ0"/>
<dbReference type="BioCyc" id="SENT99287:STM1565-MONOMER"/>
<dbReference type="Proteomes" id="UP000001014">
    <property type="component" value="Chromosome"/>
</dbReference>
<dbReference type="GO" id="GO:0006412">
    <property type="term" value="P:translation"/>
    <property type="evidence" value="ECO:0007669"/>
    <property type="project" value="InterPro"/>
</dbReference>
<dbReference type="InterPro" id="IPR012607">
    <property type="entry name" value="SRA-like"/>
</dbReference>
<dbReference type="NCBIfam" id="NF007473">
    <property type="entry name" value="PRK10057.1"/>
    <property type="match status" value="1"/>
</dbReference>
<dbReference type="Pfam" id="PF08136">
    <property type="entry name" value="SRA_like"/>
    <property type="match status" value="1"/>
</dbReference>
<accession>Q7CQJ0</accession>
<reference key="1">
    <citation type="journal article" date="2001" name="Nature">
        <title>Complete genome sequence of Salmonella enterica serovar Typhimurium LT2.</title>
        <authorList>
            <person name="McClelland M."/>
            <person name="Sanderson K.E."/>
            <person name="Spieth J."/>
            <person name="Clifton S.W."/>
            <person name="Latreille P."/>
            <person name="Courtney L."/>
            <person name="Porwollik S."/>
            <person name="Ali J."/>
            <person name="Dante M."/>
            <person name="Du F."/>
            <person name="Hou S."/>
            <person name="Layman D."/>
            <person name="Leonard S."/>
            <person name="Nguyen C."/>
            <person name="Scott K."/>
            <person name="Holmes A."/>
            <person name="Grewal N."/>
            <person name="Mulvaney E."/>
            <person name="Ryan E."/>
            <person name="Sun H."/>
            <person name="Florea L."/>
            <person name="Miller W."/>
            <person name="Stoneking T."/>
            <person name="Nhan M."/>
            <person name="Waterston R."/>
            <person name="Wilson R.K."/>
        </authorList>
    </citation>
    <scope>NUCLEOTIDE SEQUENCE [LARGE SCALE GENOMIC DNA]</scope>
    <source>
        <strain>LT2 / SGSC1412 / ATCC 700720</strain>
    </source>
</reference>
<organism>
    <name type="scientific">Salmonella typhimurium (strain LT2 / SGSC1412 / ATCC 700720)</name>
    <dbReference type="NCBI Taxonomy" id="99287"/>
    <lineage>
        <taxon>Bacteria</taxon>
        <taxon>Pseudomonadati</taxon>
        <taxon>Pseudomonadota</taxon>
        <taxon>Gammaproteobacteria</taxon>
        <taxon>Enterobacterales</taxon>
        <taxon>Enterobacteriaceae</taxon>
        <taxon>Salmonella</taxon>
    </lineage>
</organism>
<evidence type="ECO:0000250" key="1"/>
<evidence type="ECO:0000256" key="2">
    <source>
        <dbReference type="SAM" id="MobiDB-lite"/>
    </source>
</evidence>
<evidence type="ECO:0000305" key="3"/>